<reference key="1">
    <citation type="journal article" date="1998" name="Nature">
        <title>Deciphering the biology of Mycobacterium tuberculosis from the complete genome sequence.</title>
        <authorList>
            <person name="Cole S.T."/>
            <person name="Brosch R."/>
            <person name="Parkhill J."/>
            <person name="Garnier T."/>
            <person name="Churcher C.M."/>
            <person name="Harris D.E."/>
            <person name="Gordon S.V."/>
            <person name="Eiglmeier K."/>
            <person name="Gas S."/>
            <person name="Barry C.E. III"/>
            <person name="Tekaia F."/>
            <person name="Badcock K."/>
            <person name="Basham D."/>
            <person name="Brown D."/>
            <person name="Chillingworth T."/>
            <person name="Connor R."/>
            <person name="Davies R.M."/>
            <person name="Devlin K."/>
            <person name="Feltwell T."/>
            <person name="Gentles S."/>
            <person name="Hamlin N."/>
            <person name="Holroyd S."/>
            <person name="Hornsby T."/>
            <person name="Jagels K."/>
            <person name="Krogh A."/>
            <person name="McLean J."/>
            <person name="Moule S."/>
            <person name="Murphy L.D."/>
            <person name="Oliver S."/>
            <person name="Osborne J."/>
            <person name="Quail M.A."/>
            <person name="Rajandream M.A."/>
            <person name="Rogers J."/>
            <person name="Rutter S."/>
            <person name="Seeger K."/>
            <person name="Skelton S."/>
            <person name="Squares S."/>
            <person name="Squares R."/>
            <person name="Sulston J.E."/>
            <person name="Taylor K."/>
            <person name="Whitehead S."/>
            <person name="Barrell B.G."/>
        </authorList>
    </citation>
    <scope>NUCLEOTIDE SEQUENCE [LARGE SCALE GENOMIC DNA]</scope>
    <source>
        <strain>ATCC 25618 / H37Rv</strain>
    </source>
</reference>
<reference key="2">
    <citation type="submission" date="2013-11" db="EMBL/GenBank/DDBJ databases">
        <title>The genome sequence of Mycobacterium tuberculosis H37Rv.</title>
        <authorList>
            <consortium name="The Broad Institute Genome Sequencing Platform"/>
            <person name="Galagan J."/>
            <person name="Kreiswirth B."/>
            <person name="Dobos K."/>
            <person name="Fortune S."/>
            <person name="Fitzgerald M."/>
            <person name="Young S.K."/>
            <person name="Zeng Q."/>
            <person name="Gargeya S."/>
            <person name="Abouelleil A."/>
            <person name="Alvarado L."/>
            <person name="Berlin A.M."/>
            <person name="Chapman S.B."/>
            <person name="Gainer-Dewar J."/>
            <person name="Goldberg J."/>
            <person name="Gnerre S."/>
            <person name="Griggs A."/>
            <person name="Gujja S."/>
            <person name="Hansen M."/>
            <person name="Howarth C."/>
            <person name="Imamovic A."/>
            <person name="Larimer J."/>
            <person name="McCowan C."/>
            <person name="Murphy C."/>
            <person name="Pearson M."/>
            <person name="Poon T."/>
            <person name="Priest M."/>
            <person name="Roberts A."/>
            <person name="Saif S."/>
            <person name="Shea T."/>
            <person name="Sykes S."/>
            <person name="Wortman J."/>
            <person name="Nusbaum C."/>
            <person name="Birren B."/>
        </authorList>
    </citation>
    <scope>NUCLEOTIDE SEQUENCE [LARGE SCALE GENOMIC DNA]</scope>
    <source>
        <strain>ATCC 25618 / H37Rv</strain>
    </source>
</reference>
<reference key="3">
    <citation type="submission" date="2014-04" db="EMBL/GenBank/DDBJ databases">
        <title>The genome sequence of Mycobacterium tuberculosis H37Rv.</title>
        <authorList>
            <consortium name="The Broad Institute Genomics Platform"/>
            <consortium name="The Broad Institute Genome Sequencing Center for Infectious Disease"/>
            <person name="Earl A.M."/>
            <person name="Kreiswirth B."/>
            <person name="Gomez J."/>
            <person name="Victor T."/>
            <person name="Desjardins C."/>
            <person name="Abeel T."/>
            <person name="Young S."/>
            <person name="Zeng Q."/>
            <person name="Gargeya S."/>
            <person name="Abouelleil A."/>
            <person name="Alvarado L."/>
            <person name="Chapman S.B."/>
            <person name="Gainer-Dewar J."/>
            <person name="Goldberg J."/>
            <person name="Griggs A."/>
            <person name="Gujja S."/>
            <person name="Hansen M."/>
            <person name="Howarth C."/>
            <person name="Imamovic A."/>
            <person name="Larimer J."/>
            <person name="Murphy C."/>
            <person name="Naylor J."/>
            <person name="Pearson M."/>
            <person name="Poon T.W."/>
            <person name="Priest M."/>
            <person name="Roberts A."/>
            <person name="Saif S."/>
            <person name="Shea T."/>
            <person name="Sykes S."/>
            <person name="Wortman J."/>
            <person name="Nusbaum C."/>
            <person name="Birren B."/>
        </authorList>
    </citation>
    <scope>NUCLEOTIDE SEQUENCE [LARGE SCALE GENOMIC DNA]</scope>
    <source>
        <strain>ATCC 25618 / H37Rv</strain>
    </source>
</reference>
<reference key="4">
    <citation type="journal article" date="2011" name="MBio">
        <title>Characterization and transcriptome analysis of Mycobacterium tuberculosis persisters.</title>
        <authorList>
            <person name="Keren I."/>
            <person name="Minami S."/>
            <person name="Rubin E."/>
            <person name="Lewis K."/>
        </authorList>
    </citation>
    <scope>INDUCTION IN PERSISTER CELLS</scope>
    <source>
        <strain>ATCC 25618 / H37Rv</strain>
    </source>
</reference>
<reference key="5">
    <citation type="journal article" date="2011" name="Mol. Cell. Proteomics">
        <title>Proteogenomic analysis of Mycobacterium tuberculosis by high resolution mass spectrometry.</title>
        <authorList>
            <person name="Kelkar D.S."/>
            <person name="Kumar D."/>
            <person name="Kumar P."/>
            <person name="Balakrishnan L."/>
            <person name="Muthusamy B."/>
            <person name="Yadav A.K."/>
            <person name="Shrivastava P."/>
            <person name="Marimuthu A."/>
            <person name="Anand S."/>
            <person name="Sundaram H."/>
            <person name="Kingsbury R."/>
            <person name="Harsha H.C."/>
            <person name="Nair B."/>
            <person name="Prasad T.S."/>
            <person name="Chauhan D.S."/>
            <person name="Katoch K."/>
            <person name="Katoch V.M."/>
            <person name="Kumar P."/>
            <person name="Chaerkady R."/>
            <person name="Ramachandran S."/>
            <person name="Dash D."/>
            <person name="Pandey A."/>
        </authorList>
    </citation>
    <scope>IDENTIFICATION BY MASS SPECTROMETRY [LARGE SCALE ANALYSIS]</scope>
    <source>
        <strain>ATCC 25618 / H37Rv</strain>
    </source>
</reference>
<reference key="6">
    <citation type="journal article" date="2014" name="Toxins">
        <title>Multiple toxin-antitoxin systems in Mycobacterium tuberculosis.</title>
        <authorList>
            <person name="Sala A."/>
            <person name="Bordes P."/>
            <person name="Genevaux P."/>
        </authorList>
    </citation>
    <scope>DISCUSSION OF POSSIBLE FUNCTION</scope>
    <source>
        <strain>ATCC 25618 / H37Rv</strain>
    </source>
</reference>
<feature type="chain" id="PRO_0000432913" description="Putative toxin HigB2">
    <location>
        <begin position="1"/>
        <end position="201"/>
    </location>
</feature>
<proteinExistence type="evidence at protein level"/>
<dbReference type="EMBL" id="AL123456">
    <property type="protein sequence ID" value="CCP44794.1"/>
    <property type="molecule type" value="Genomic_DNA"/>
</dbReference>
<dbReference type="EMBL" id="CP003248">
    <property type="protein sequence ID" value="AFN49962.1"/>
    <property type="molecule type" value="Genomic_DNA"/>
</dbReference>
<dbReference type="EMBL" id="JLDD01000023">
    <property type="protein sequence ID" value="KBJ33166.1"/>
    <property type="molecule type" value="Genomic_DNA"/>
</dbReference>
<dbReference type="RefSeq" id="NP_216538.1">
    <property type="nucleotide sequence ID" value="NC_000962.3"/>
</dbReference>
<dbReference type="RefSeq" id="WP_003900449.1">
    <property type="nucleotide sequence ID" value="NZ_NVQJ01000046.1"/>
</dbReference>
<dbReference type="SMR" id="O53468"/>
<dbReference type="STRING" id="83332.Rv2022c"/>
<dbReference type="PaxDb" id="83332-Rv2022c"/>
<dbReference type="DNASU" id="888129"/>
<dbReference type="GeneID" id="888129"/>
<dbReference type="KEGG" id="mtu:Rv2022c"/>
<dbReference type="KEGG" id="mtv:RVBD_2022c"/>
<dbReference type="PATRIC" id="fig|83332.111.peg.2253"/>
<dbReference type="TubercuList" id="Rv2022c"/>
<dbReference type="eggNOG" id="COG4683">
    <property type="taxonomic scope" value="Bacteria"/>
</dbReference>
<dbReference type="HOGENOM" id="CLU_1359168_0_0_11"/>
<dbReference type="InParanoid" id="O53468"/>
<dbReference type="OrthoDB" id="330810at2"/>
<dbReference type="PhylomeDB" id="O53468"/>
<dbReference type="Proteomes" id="UP000001584">
    <property type="component" value="Chromosome"/>
</dbReference>
<dbReference type="InterPro" id="IPR009241">
    <property type="entry name" value="HigB-like"/>
</dbReference>
<dbReference type="Pfam" id="PF05973">
    <property type="entry name" value="Gp49"/>
    <property type="match status" value="1"/>
</dbReference>
<comment type="function">
    <text evidence="4">Putative toxic component of a type II toxin-antitoxin (TA) system. Its cognate antitoxin would be HigA2.</text>
</comment>
<comment type="induction">
    <text evidence="1">Induced in persister cells in response to D-cycloserine.</text>
</comment>
<comment type="similarity">
    <text evidence="3">Belongs to the mycobacterial HigB family.</text>
</comment>
<protein>
    <recommendedName>
        <fullName evidence="2">Putative toxin HigB2</fullName>
    </recommendedName>
</protein>
<evidence type="ECO:0000269" key="1">
    <source>
    </source>
</evidence>
<evidence type="ECO:0000303" key="2">
    <source>
    </source>
</evidence>
<evidence type="ECO:0000305" key="3"/>
<evidence type="ECO:0000305" key="4">
    <source>
    </source>
</evidence>
<organism>
    <name type="scientific">Mycobacterium tuberculosis (strain ATCC 25618 / H37Rv)</name>
    <dbReference type="NCBI Taxonomy" id="83332"/>
    <lineage>
        <taxon>Bacteria</taxon>
        <taxon>Bacillati</taxon>
        <taxon>Actinomycetota</taxon>
        <taxon>Actinomycetes</taxon>
        <taxon>Mycobacteriales</taxon>
        <taxon>Mycobacteriaceae</taxon>
        <taxon>Mycobacterium</taxon>
        <taxon>Mycobacterium tuberculosis complex</taxon>
    </lineage>
</organism>
<gene>
    <name evidence="2" type="primary">higB2</name>
    <name type="ordered locus">Rv2022c</name>
    <name type="ordered locus">RVBD_2022c</name>
    <name type="ORF">P425_02093</name>
</gene>
<sequence>MNVPWENAHGGALYCLIRGDEFSAWHRLLFQRPGCAESVLACRHFLDGSPVARCSYPEEYHPCVISRIALLCDSVGWTADVERISAWLNGLDRETYELVFAAIEVLEEEGPALGCPLVDTVRGSRHKNMKELRPGSQGRSEVRILFAFDPARQAIMLAAGNKAGRWTQWYDEKIKAADEMFAEHLAQFEDTKPKRRKRKKG</sequence>
<name>HIGB2_MYCTU</name>
<keyword id="KW-1185">Reference proteome</keyword>
<keyword id="KW-1277">Toxin-antitoxin system</keyword>
<accession>O53468</accession>
<accession>I6Y858</accession>
<accession>Q7D7M0</accession>